<feature type="chain" id="PRO_0000384561" description="Uncharacterized protein ORF150">
    <location>
        <begin position="1"/>
        <end position="150"/>
    </location>
</feature>
<sequence>MSEDLTFEERYQKDIRRRESFFSDFHLTDYSNYLGMKDTDELQTKGYVVYIADGYITEYILRYFDKQYAVIDDYLYYVLIVKFMGGFKVFIYEYSYGKLLESDLSDYSIFEKSIADINSLISSCYHIALSLSHTFFNITEYYTKYISNFK</sequence>
<protein>
    <recommendedName>
        <fullName>Uncharacterized protein ORF150</fullName>
    </recommendedName>
</protein>
<proteinExistence type="predicted"/>
<keyword id="KW-1185">Reference proteome</keyword>
<accession>Q70LF0</accession>
<dbReference type="EMBL" id="AJ567472">
    <property type="protein sequence ID" value="CAD98930.1"/>
    <property type="molecule type" value="Genomic_DNA"/>
</dbReference>
<dbReference type="RefSeq" id="YP_003726.1">
    <property type="nucleotide sequence ID" value="NC_005830.1"/>
</dbReference>
<dbReference type="KEGG" id="vg:2769187"/>
<dbReference type="Proteomes" id="UP000000514">
    <property type="component" value="Genome"/>
</dbReference>
<gene>
    <name type="ORF">ORF150</name>
</gene>
<organism>
    <name type="scientific">Acidianus filamentous virus 1 (isolate United States/Yellowstone)</name>
    <name type="common">AFV-1</name>
    <dbReference type="NCBI Taxonomy" id="654909"/>
    <lineage>
        <taxon>Viruses</taxon>
        <taxon>Adnaviria</taxon>
        <taxon>Zilligvirae</taxon>
        <taxon>Taleaviricota</taxon>
        <taxon>Tokiviricetes</taxon>
        <taxon>Ligamenvirales</taxon>
        <taxon>Ungulaviridae</taxon>
        <taxon>Captovirus</taxon>
        <taxon>Acidianus filamentous virus 1</taxon>
    </lineage>
</organism>
<name>Y150_AFV1Y</name>
<organismHost>
    <name type="scientific">Acidianus hospitalis</name>
    <dbReference type="NCBI Taxonomy" id="563177"/>
</organismHost>
<organismHost>
    <name type="scientific">Acidianus infernus</name>
    <dbReference type="NCBI Taxonomy" id="12915"/>
</organismHost>
<reference key="1">
    <citation type="journal article" date="2003" name="Virology">
        <title>AFV1, a novel virus infecting hyperthermophilic archaea of the genus acidianus.</title>
        <authorList>
            <person name="Bettstetter M."/>
            <person name="Peng X."/>
            <person name="Garrett R.A."/>
            <person name="Prangishvili D."/>
        </authorList>
    </citation>
    <scope>NUCLEOTIDE SEQUENCE [GENOMIC DNA]</scope>
</reference>